<protein>
    <recommendedName>
        <fullName evidence="1">Phosphoenolpyruvate carboxylase</fullName>
        <shortName evidence="1">PEPC</shortName>
        <shortName evidence="1">PEPCase</shortName>
        <ecNumber evidence="1">4.1.1.31</ecNumber>
    </recommendedName>
</protein>
<evidence type="ECO:0000255" key="1">
    <source>
        <dbReference type="HAMAP-Rule" id="MF_01904"/>
    </source>
</evidence>
<comment type="function">
    <text evidence="1">Catalyzes the irreversible beta-carboxylation of phosphoenolpyruvate (PEP) to form oxaloacetate (OAA), a four-carbon dicarboxylic acid source for the tricarboxylic acid cycle.</text>
</comment>
<comment type="catalytic activity">
    <reaction evidence="1">
        <text>oxaloacetate + phosphate = phosphoenolpyruvate + hydrogencarbonate</text>
        <dbReference type="Rhea" id="RHEA:28370"/>
        <dbReference type="ChEBI" id="CHEBI:16452"/>
        <dbReference type="ChEBI" id="CHEBI:17544"/>
        <dbReference type="ChEBI" id="CHEBI:43474"/>
        <dbReference type="ChEBI" id="CHEBI:58702"/>
        <dbReference type="EC" id="4.1.1.31"/>
    </reaction>
</comment>
<comment type="cofactor">
    <cofactor evidence="1">
        <name>Mg(2+)</name>
        <dbReference type="ChEBI" id="CHEBI:18420"/>
    </cofactor>
</comment>
<comment type="subunit">
    <text evidence="1">Homotetramer.</text>
</comment>
<comment type="similarity">
    <text evidence="1">Belongs to the PEPCase type 2 family.</text>
</comment>
<sequence length="512" mass="57872">MRIIPRTMCTQHPDYANVPQWVVNDFIKGDDEVYEAYMNYSIYDCQETMWDFEGKDVDIYVVRKLLENYGGFFINKVLGEDIYLTYRLPNPNVEASDRKIFAEALETIPMAYDLARVFYGKPVKAIFEVIFPLTSSSRDLIMTLRYYERIVAGKCSVELDDGLKVSDVIGEVEPKTIEVIPLVEDMESLVRIDSIIEGYVKVAKPQYLRVFIARSDPAMNYGLIPAVLLAKIALSRVYAIGNSLGLSIYPIIGVGPTPFRGNFNPRNVNNTLKEYPGVYTFTVQSAFRYDYPVDNAKDAINLINNSKPTEPVILSSDEEELALTIIRQYTDRYQAEVEGLANAVNYIAQLLPPRRTRRLHIGLFGYGRGFRGVTLPRAIAFVGALYSIGIPPEILGLSTLLKLNERQWGVLEGNYVNLWSDLSDAAQYICMECIEQLPSMKSELRVSKETIAMVLEDIKAIDELGVKVSSPGFEQRKHALLTKLFLESVNNSYINDAKAYLLDMAKVRRAIG</sequence>
<gene>
    <name evidence="1" type="primary">ppcA</name>
    <name type="ordered locus">Cmaq_1916</name>
</gene>
<name>CAPPA_CALMQ</name>
<accession>A8MBK0</accession>
<keyword id="KW-0120">Carbon dioxide fixation</keyword>
<keyword id="KW-0456">Lyase</keyword>
<keyword id="KW-0460">Magnesium</keyword>
<keyword id="KW-1185">Reference proteome</keyword>
<feature type="chain" id="PRO_1000088477" description="Phosphoenolpyruvate carboxylase">
    <location>
        <begin position="1"/>
        <end position="512"/>
    </location>
</feature>
<proteinExistence type="inferred from homology"/>
<organism>
    <name type="scientific">Caldivirga maquilingensis (strain ATCC 700844 / DSM 13496 / JCM 10307 / IC-167)</name>
    <dbReference type="NCBI Taxonomy" id="397948"/>
    <lineage>
        <taxon>Archaea</taxon>
        <taxon>Thermoproteota</taxon>
        <taxon>Thermoprotei</taxon>
        <taxon>Thermoproteales</taxon>
        <taxon>Thermoproteaceae</taxon>
        <taxon>Caldivirga</taxon>
    </lineage>
</organism>
<reference key="1">
    <citation type="submission" date="2007-10" db="EMBL/GenBank/DDBJ databases">
        <title>Complete sequence of Caldivirga maquilingensis IC-167.</title>
        <authorList>
            <consortium name="US DOE Joint Genome Institute"/>
            <person name="Copeland A."/>
            <person name="Lucas S."/>
            <person name="Lapidus A."/>
            <person name="Barry K."/>
            <person name="Glavina del Rio T."/>
            <person name="Dalin E."/>
            <person name="Tice H."/>
            <person name="Pitluck S."/>
            <person name="Saunders E."/>
            <person name="Brettin T."/>
            <person name="Bruce D."/>
            <person name="Detter J.C."/>
            <person name="Han C."/>
            <person name="Schmutz J."/>
            <person name="Larimer F."/>
            <person name="Land M."/>
            <person name="Hauser L."/>
            <person name="Kyrpides N."/>
            <person name="Ivanova N."/>
            <person name="Biddle J.F."/>
            <person name="Zhang Z."/>
            <person name="Fitz-Gibbon S.T."/>
            <person name="Lowe T.M."/>
            <person name="Saltikov C."/>
            <person name="House C.H."/>
            <person name="Richardson P."/>
        </authorList>
    </citation>
    <scope>NUCLEOTIDE SEQUENCE [LARGE SCALE GENOMIC DNA]</scope>
    <source>
        <strain>ATCC 700844 / DSM 13496 / JCM 10307 / IC-167</strain>
    </source>
</reference>
<dbReference type="EC" id="4.1.1.31" evidence="1"/>
<dbReference type="EMBL" id="CP000852">
    <property type="protein sequence ID" value="ABW02733.1"/>
    <property type="molecule type" value="Genomic_DNA"/>
</dbReference>
<dbReference type="RefSeq" id="WP_012186952.1">
    <property type="nucleotide sequence ID" value="NC_009954.1"/>
</dbReference>
<dbReference type="SMR" id="A8MBK0"/>
<dbReference type="STRING" id="397948.Cmaq_1916"/>
<dbReference type="GeneID" id="5709298"/>
<dbReference type="KEGG" id="cma:Cmaq_1916"/>
<dbReference type="eggNOG" id="arCOG04435">
    <property type="taxonomic scope" value="Archaea"/>
</dbReference>
<dbReference type="HOGENOM" id="CLU_517433_0_0_2"/>
<dbReference type="OrthoDB" id="85849at2157"/>
<dbReference type="Proteomes" id="UP000001137">
    <property type="component" value="Chromosome"/>
</dbReference>
<dbReference type="GO" id="GO:0000287">
    <property type="term" value="F:magnesium ion binding"/>
    <property type="evidence" value="ECO:0007669"/>
    <property type="project" value="UniProtKB-UniRule"/>
</dbReference>
<dbReference type="GO" id="GO:0008964">
    <property type="term" value="F:phosphoenolpyruvate carboxylase activity"/>
    <property type="evidence" value="ECO:0007669"/>
    <property type="project" value="UniProtKB-UniRule"/>
</dbReference>
<dbReference type="GO" id="GO:0015977">
    <property type="term" value="P:carbon fixation"/>
    <property type="evidence" value="ECO:0007669"/>
    <property type="project" value="UniProtKB-UniRule"/>
</dbReference>
<dbReference type="GO" id="GO:0006107">
    <property type="term" value="P:oxaloacetate metabolic process"/>
    <property type="evidence" value="ECO:0007669"/>
    <property type="project" value="UniProtKB-UniRule"/>
</dbReference>
<dbReference type="GO" id="GO:0006099">
    <property type="term" value="P:tricarboxylic acid cycle"/>
    <property type="evidence" value="ECO:0007669"/>
    <property type="project" value="InterPro"/>
</dbReference>
<dbReference type="HAMAP" id="MF_01904">
    <property type="entry name" value="PEPcase_type2"/>
    <property type="match status" value="1"/>
</dbReference>
<dbReference type="InterPro" id="IPR007566">
    <property type="entry name" value="PEP_COase_arc-type"/>
</dbReference>
<dbReference type="InterPro" id="IPR015813">
    <property type="entry name" value="Pyrv/PenolPyrv_kinase-like_dom"/>
</dbReference>
<dbReference type="NCBIfam" id="TIGR02751">
    <property type="entry name" value="PEPCase_arch"/>
    <property type="match status" value="1"/>
</dbReference>
<dbReference type="Pfam" id="PF14010">
    <property type="entry name" value="PEPcase_2"/>
    <property type="match status" value="1"/>
</dbReference>
<dbReference type="PIRSF" id="PIRSF006677">
    <property type="entry name" value="UCP006677"/>
    <property type="match status" value="1"/>
</dbReference>
<dbReference type="SUPFAM" id="SSF51621">
    <property type="entry name" value="Phosphoenolpyruvate/pyruvate domain"/>
    <property type="match status" value="1"/>
</dbReference>